<keyword id="KW-1185">Reference proteome</keyword>
<keyword id="KW-0687">Ribonucleoprotein</keyword>
<keyword id="KW-0689">Ribosomal protein</keyword>
<keyword id="KW-0694">RNA-binding</keyword>
<keyword id="KW-0699">rRNA-binding</keyword>
<reference key="1">
    <citation type="journal article" date="2001" name="DNA Res.">
        <title>Complete genome sequence of an aerobic thermoacidophilic Crenarchaeon, Sulfolobus tokodaii strain7.</title>
        <authorList>
            <person name="Kawarabayasi Y."/>
            <person name="Hino Y."/>
            <person name="Horikawa H."/>
            <person name="Jin-no K."/>
            <person name="Takahashi M."/>
            <person name="Sekine M."/>
            <person name="Baba S."/>
            <person name="Ankai A."/>
            <person name="Kosugi H."/>
            <person name="Hosoyama A."/>
            <person name="Fukui S."/>
            <person name="Nagai Y."/>
            <person name="Nishijima K."/>
            <person name="Otsuka R."/>
            <person name="Nakazawa H."/>
            <person name="Takamiya M."/>
            <person name="Kato Y."/>
            <person name="Yoshizawa T."/>
            <person name="Tanaka T."/>
            <person name="Kudoh Y."/>
            <person name="Yamazaki J."/>
            <person name="Kushida N."/>
            <person name="Oguchi A."/>
            <person name="Aoki K."/>
            <person name="Masuda S."/>
            <person name="Yanagii M."/>
            <person name="Nishimura M."/>
            <person name="Yamagishi A."/>
            <person name="Oshima T."/>
            <person name="Kikuchi H."/>
        </authorList>
    </citation>
    <scope>NUCLEOTIDE SEQUENCE [LARGE SCALE GENOMIC DNA]</scope>
    <source>
        <strain>DSM 16993 / JCM 10545 / NBRC 100140 / 7</strain>
    </source>
</reference>
<protein>
    <recommendedName>
        <fullName evidence="1">Large ribosomal subunit protein uL4</fullName>
    </recommendedName>
    <alternativeName>
        <fullName evidence="2">50S ribosomal protein L4</fullName>
    </alternativeName>
</protein>
<gene>
    <name evidence="1" type="primary">rpl4</name>
    <name type="ordered locus">STK_04280</name>
</gene>
<name>RL4_SULTO</name>
<proteinExistence type="inferred from homology"/>
<comment type="function">
    <text evidence="1">One of the primary rRNA binding proteins, this protein initially binds near the 5'-end of the 23S rRNA. It is important during the early stages of 50S assembly. It makes multiple contacts with different domains of the 23S rRNA in the assembled 50S subunit and ribosome.</text>
</comment>
<comment type="function">
    <text evidence="1">Forms part of the polypeptide exit tunnel.</text>
</comment>
<comment type="subunit">
    <text evidence="1">Part of the 50S ribosomal subunit.</text>
</comment>
<comment type="similarity">
    <text evidence="1">Belongs to the universal ribosomal protein uL4 family.</text>
</comment>
<organism>
    <name type="scientific">Sulfurisphaera tokodaii (strain DSM 16993 / JCM 10545 / NBRC 100140 / 7)</name>
    <name type="common">Sulfolobus tokodaii</name>
    <dbReference type="NCBI Taxonomy" id="273063"/>
    <lineage>
        <taxon>Archaea</taxon>
        <taxon>Thermoproteota</taxon>
        <taxon>Thermoprotei</taxon>
        <taxon>Sulfolobales</taxon>
        <taxon>Sulfolobaceae</taxon>
        <taxon>Sulfurisphaera</taxon>
    </lineage>
</organism>
<sequence length="266" mass="29761">MYLELQIKKTHIFDLKGNKVEEIELPIFFSYPVRKDLIRRVFISEFTKALQPKGRDPMAGKRTSALSFGINLGLARVPRVKTTGEAALAPNTVGGRLAFPPTVEKKLVEEVNKKEKKLAIISALSATANMNFVKNRGHVFSIDTLPIIVVDDITKLTKTKEIIEVLESLKVYEDVERVKDRIRIRSGKGKMRGRRYKEPKGPLFVIHENNPVFVKAASNIPGVDVILASDLSVIHLAPGGHPGRLTIYTKSSIDVLRKRFEGRLAL</sequence>
<evidence type="ECO:0000255" key="1">
    <source>
        <dbReference type="HAMAP-Rule" id="MF_01328"/>
    </source>
</evidence>
<evidence type="ECO:0000305" key="2"/>
<feature type="chain" id="PRO_0000129345" description="Large ribosomal subunit protein uL4">
    <location>
        <begin position="1"/>
        <end position="266"/>
    </location>
</feature>
<accession>Q975I2</accession>
<accession>F9VMY1</accession>
<dbReference type="EMBL" id="BA000023">
    <property type="protein sequence ID" value="BAK54278.1"/>
    <property type="molecule type" value="Genomic_DNA"/>
</dbReference>
<dbReference type="RefSeq" id="WP_052846313.1">
    <property type="nucleotide sequence ID" value="NC_003106.2"/>
</dbReference>
<dbReference type="SMR" id="Q975I2"/>
<dbReference type="STRING" id="273063.STK_04280"/>
<dbReference type="GeneID" id="1458365"/>
<dbReference type="KEGG" id="sto:STK_04280"/>
<dbReference type="PATRIC" id="fig|273063.9.peg.499"/>
<dbReference type="eggNOG" id="arCOG04071">
    <property type="taxonomic scope" value="Archaea"/>
</dbReference>
<dbReference type="OrthoDB" id="10737at2157"/>
<dbReference type="Proteomes" id="UP000001015">
    <property type="component" value="Chromosome"/>
</dbReference>
<dbReference type="GO" id="GO:1990904">
    <property type="term" value="C:ribonucleoprotein complex"/>
    <property type="evidence" value="ECO:0007669"/>
    <property type="project" value="UniProtKB-KW"/>
</dbReference>
<dbReference type="GO" id="GO:0005840">
    <property type="term" value="C:ribosome"/>
    <property type="evidence" value="ECO:0007669"/>
    <property type="project" value="UniProtKB-KW"/>
</dbReference>
<dbReference type="GO" id="GO:0019843">
    <property type="term" value="F:rRNA binding"/>
    <property type="evidence" value="ECO:0007669"/>
    <property type="project" value="UniProtKB-UniRule"/>
</dbReference>
<dbReference type="GO" id="GO:0003735">
    <property type="term" value="F:structural constituent of ribosome"/>
    <property type="evidence" value="ECO:0007669"/>
    <property type="project" value="InterPro"/>
</dbReference>
<dbReference type="GO" id="GO:0006412">
    <property type="term" value="P:translation"/>
    <property type="evidence" value="ECO:0007669"/>
    <property type="project" value="UniProtKB-UniRule"/>
</dbReference>
<dbReference type="FunFam" id="3.40.1370.10:FF:000011">
    <property type="entry name" value="50S ribosomal protein L4"/>
    <property type="match status" value="1"/>
</dbReference>
<dbReference type="Gene3D" id="3.40.1370.10">
    <property type="match status" value="1"/>
</dbReference>
<dbReference type="HAMAP" id="MF_01328_A">
    <property type="entry name" value="Ribosomal_uL4_A"/>
    <property type="match status" value="1"/>
</dbReference>
<dbReference type="InterPro" id="IPR002136">
    <property type="entry name" value="Ribosomal_uL4"/>
</dbReference>
<dbReference type="InterPro" id="IPR023574">
    <property type="entry name" value="Ribosomal_uL4_dom_sf"/>
</dbReference>
<dbReference type="InterPro" id="IPR013000">
    <property type="entry name" value="Ribosomal_uL4_euk/arc_CS"/>
</dbReference>
<dbReference type="InterPro" id="IPR045240">
    <property type="entry name" value="Ribosomal_uL4_euk/arch"/>
</dbReference>
<dbReference type="InterPro" id="IPR019970">
    <property type="entry name" value="Ribosomall_uL4-arc"/>
</dbReference>
<dbReference type="NCBIfam" id="TIGR03672">
    <property type="entry name" value="rpl4p_arch"/>
    <property type="match status" value="1"/>
</dbReference>
<dbReference type="PANTHER" id="PTHR19431">
    <property type="entry name" value="60S RIBOSOMAL PROTEIN L4"/>
    <property type="match status" value="1"/>
</dbReference>
<dbReference type="Pfam" id="PF00573">
    <property type="entry name" value="Ribosomal_L4"/>
    <property type="match status" value="1"/>
</dbReference>
<dbReference type="SUPFAM" id="SSF52166">
    <property type="entry name" value="Ribosomal protein L4"/>
    <property type="match status" value="1"/>
</dbReference>
<dbReference type="PROSITE" id="PS00939">
    <property type="entry name" value="RIBOSOMAL_L1E"/>
    <property type="match status" value="1"/>
</dbReference>